<dbReference type="EC" id="7.4.2.8" evidence="15 16"/>
<dbReference type="EMBL" id="M81458">
    <property type="protein sequence ID" value="AAA26541.1"/>
    <property type="molecule type" value="Genomic_DNA"/>
</dbReference>
<dbReference type="EMBL" id="D13663">
    <property type="protein sequence ID" value="BAA02825.1"/>
    <property type="molecule type" value="Genomic_DNA"/>
</dbReference>
<dbReference type="EMBL" id="AL391753">
    <property type="protein sequence ID" value="CAC05824.1"/>
    <property type="molecule type" value="Genomic_DNA"/>
</dbReference>
<dbReference type="EMBL" id="AF348706">
    <property type="protein sequence ID" value="AAK18468.1"/>
    <property type="molecule type" value="Genomic_DNA"/>
</dbReference>
<dbReference type="EMBL" id="AF386526">
    <property type="protein sequence ID" value="AAL72302.1"/>
    <property type="molecule type" value="Genomic_DNA"/>
</dbReference>
<dbReference type="PIR" id="C42284">
    <property type="entry name" value="C42284"/>
</dbReference>
<dbReference type="RefSeq" id="NP_085312.1">
    <property type="nucleotide sequence ID" value="NC_002698.1"/>
</dbReference>
<dbReference type="RefSeq" id="NP_858282.1">
    <property type="nucleotide sequence ID" value="NC_004851.1"/>
</dbReference>
<dbReference type="RefSeq" id="WP_000122616.1">
    <property type="nucleotide sequence ID" value="NZ_WPGS01000043.1"/>
</dbReference>
<dbReference type="RefSeq" id="YP_009062506.1">
    <property type="nucleotide sequence ID" value="NC_024996.1"/>
</dbReference>
<dbReference type="PDB" id="5SWJ">
    <property type="method" value="X-ray"/>
    <property type="resolution" value="2.40 A"/>
    <property type="chains" value="A/B=80-430"/>
</dbReference>
<dbReference type="PDB" id="5SWL">
    <property type="method" value="X-ray"/>
    <property type="resolution" value="2.70 A"/>
    <property type="chains" value="A/B=80-430"/>
</dbReference>
<dbReference type="PDB" id="5SYP">
    <property type="method" value="X-ray"/>
    <property type="resolution" value="2.15 A"/>
    <property type="chains" value="A/B=80-430"/>
</dbReference>
<dbReference type="PDB" id="5SYR">
    <property type="method" value="X-ray"/>
    <property type="resolution" value="1.80 A"/>
    <property type="chains" value="A/B=80-430"/>
</dbReference>
<dbReference type="PDB" id="5YBH">
    <property type="method" value="X-ray"/>
    <property type="resolution" value="2.50 A"/>
    <property type="chains" value="A/B=84-430"/>
</dbReference>
<dbReference type="PDB" id="5YBI">
    <property type="method" value="X-ray"/>
    <property type="resolution" value="2.27 A"/>
    <property type="chains" value="A/B=84-430"/>
</dbReference>
<dbReference type="PDB" id="5ZT1">
    <property type="method" value="X-ray"/>
    <property type="resolution" value="3.11 A"/>
    <property type="chains" value="A/B=84-430"/>
</dbReference>
<dbReference type="PDB" id="6N6L">
    <property type="method" value="X-ray"/>
    <property type="resolution" value="2.15 A"/>
    <property type="chains" value="A/B=80-430"/>
</dbReference>
<dbReference type="PDB" id="6N6M">
    <property type="method" value="X-ray"/>
    <property type="resolution" value="2.79 A"/>
    <property type="chains" value="A/B=80-430"/>
</dbReference>
<dbReference type="PDB" id="6N6Z">
    <property type="method" value="X-ray"/>
    <property type="resolution" value="2.64 A"/>
    <property type="chains" value="A/B=80-430"/>
</dbReference>
<dbReference type="PDB" id="6N70">
    <property type="method" value="X-ray"/>
    <property type="resolution" value="2.74 A"/>
    <property type="chains" value="A/B=80-430"/>
</dbReference>
<dbReference type="PDB" id="6N71">
    <property type="method" value="X-ray"/>
    <property type="resolution" value="2.45 A"/>
    <property type="chains" value="A/B=80-430"/>
</dbReference>
<dbReference type="PDB" id="6N72">
    <property type="method" value="X-ray"/>
    <property type="resolution" value="2.73 A"/>
    <property type="chains" value="A/B=80-430"/>
</dbReference>
<dbReference type="PDB" id="6N73">
    <property type="method" value="X-ray"/>
    <property type="resolution" value="2.40 A"/>
    <property type="chains" value="A/B=80-430"/>
</dbReference>
<dbReference type="PDB" id="6N74">
    <property type="method" value="X-ray"/>
    <property type="resolution" value="1.85 A"/>
    <property type="chains" value="A/B=80-430"/>
</dbReference>
<dbReference type="PDB" id="6N75">
    <property type="method" value="X-ray"/>
    <property type="resolution" value="2.99 A"/>
    <property type="chains" value="A/B=80-430"/>
</dbReference>
<dbReference type="PDB" id="6N76">
    <property type="method" value="X-ray"/>
    <property type="resolution" value="2.89 A"/>
    <property type="chains" value="A/B=80-430"/>
</dbReference>
<dbReference type="PDBsum" id="5SWJ"/>
<dbReference type="PDBsum" id="5SWL"/>
<dbReference type="PDBsum" id="5SYP"/>
<dbReference type="PDBsum" id="5SYR"/>
<dbReference type="PDBsum" id="5YBH"/>
<dbReference type="PDBsum" id="5YBI"/>
<dbReference type="PDBsum" id="5ZT1"/>
<dbReference type="PDBsum" id="6N6L"/>
<dbReference type="PDBsum" id="6N6M"/>
<dbReference type="PDBsum" id="6N6Z"/>
<dbReference type="PDBsum" id="6N70"/>
<dbReference type="PDBsum" id="6N71"/>
<dbReference type="PDBsum" id="6N72"/>
<dbReference type="PDBsum" id="6N73"/>
<dbReference type="PDBsum" id="6N74"/>
<dbReference type="PDBsum" id="6N75"/>
<dbReference type="PDBsum" id="6N76"/>
<dbReference type="SMR" id="P0A1C1"/>
<dbReference type="MINT" id="P0A1C1"/>
<dbReference type="TCDB" id="3.A.6.1.2">
    <property type="family name" value="the type iii (virulence-related) secretory pathway (iiisp) family"/>
</dbReference>
<dbReference type="PaxDb" id="198214-CP0149"/>
<dbReference type="GeneID" id="1237998"/>
<dbReference type="KEGG" id="sfl:CP0149"/>
<dbReference type="PATRIC" id="fig|198214.7.peg.5395"/>
<dbReference type="HOGENOM" id="CLU_022398_5_1_6"/>
<dbReference type="BRENDA" id="7.1.2.2">
    <property type="organism ID" value="5712"/>
</dbReference>
<dbReference type="BRENDA" id="7.4.2.8">
    <property type="organism ID" value="5712"/>
</dbReference>
<dbReference type="SABIO-RK" id="P0A1C1"/>
<dbReference type="PHI-base" id="PHI:9923"/>
<dbReference type="Proteomes" id="UP000001006">
    <property type="component" value="Plasmid pCP301"/>
</dbReference>
<dbReference type="GO" id="GO:0005737">
    <property type="term" value="C:cytoplasm"/>
    <property type="evidence" value="ECO:0007669"/>
    <property type="project" value="UniProtKB-SubCell"/>
</dbReference>
<dbReference type="GO" id="GO:0030257">
    <property type="term" value="C:type III protein secretion system complex"/>
    <property type="evidence" value="ECO:0007669"/>
    <property type="project" value="InterPro"/>
</dbReference>
<dbReference type="GO" id="GO:0005524">
    <property type="term" value="F:ATP binding"/>
    <property type="evidence" value="ECO:0007669"/>
    <property type="project" value="UniProtKB-KW"/>
</dbReference>
<dbReference type="GO" id="GO:0016887">
    <property type="term" value="F:ATP hydrolysis activity"/>
    <property type="evidence" value="ECO:0007669"/>
    <property type="project" value="InterPro"/>
</dbReference>
<dbReference type="GO" id="GO:0042802">
    <property type="term" value="F:identical protein binding"/>
    <property type="evidence" value="ECO:0000353"/>
    <property type="project" value="IntAct"/>
</dbReference>
<dbReference type="GO" id="GO:0008564">
    <property type="term" value="F:protein-exporting ATPase activity"/>
    <property type="evidence" value="ECO:0007669"/>
    <property type="project" value="UniProtKB-EC"/>
</dbReference>
<dbReference type="GO" id="GO:0046933">
    <property type="term" value="F:proton-transporting ATP synthase activity, rotational mechanism"/>
    <property type="evidence" value="ECO:0007669"/>
    <property type="project" value="TreeGrafter"/>
</dbReference>
<dbReference type="GO" id="GO:0030254">
    <property type="term" value="P:protein secretion by the type III secretion system"/>
    <property type="evidence" value="ECO:0007669"/>
    <property type="project" value="InterPro"/>
</dbReference>
<dbReference type="CDD" id="cd01426">
    <property type="entry name" value="ATP-synt_F1_V1_A1_AB_FliI_N"/>
    <property type="match status" value="1"/>
</dbReference>
<dbReference type="CDD" id="cd01136">
    <property type="entry name" value="ATPase_flagellum-secretory_path_III"/>
    <property type="match status" value="1"/>
</dbReference>
<dbReference type="FunFam" id="3.40.50.12240:FF:000002">
    <property type="entry name" value="Flagellum-specific ATP synthase FliI"/>
    <property type="match status" value="1"/>
</dbReference>
<dbReference type="Gene3D" id="3.40.50.12240">
    <property type="match status" value="1"/>
</dbReference>
<dbReference type="InterPro" id="IPR003593">
    <property type="entry name" value="AAA+_ATPase"/>
</dbReference>
<dbReference type="InterPro" id="IPR020003">
    <property type="entry name" value="ATPase_a/bsu_AS"/>
</dbReference>
<dbReference type="InterPro" id="IPR050053">
    <property type="entry name" value="ATPase_alpha/beta_chains"/>
</dbReference>
<dbReference type="InterPro" id="IPR004100">
    <property type="entry name" value="ATPase_F1/V1/A1_a/bsu_N"/>
</dbReference>
<dbReference type="InterPro" id="IPR000194">
    <property type="entry name" value="ATPase_F1/V1/A1_a/bsu_nucl-bd"/>
</dbReference>
<dbReference type="InterPro" id="IPR005714">
    <property type="entry name" value="ATPase_T3SS_FliI/YscN"/>
</dbReference>
<dbReference type="InterPro" id="IPR027417">
    <property type="entry name" value="P-loop_NTPase"/>
</dbReference>
<dbReference type="InterPro" id="IPR040627">
    <property type="entry name" value="T3SS_ATPase_C"/>
</dbReference>
<dbReference type="NCBIfam" id="TIGR01026">
    <property type="entry name" value="fliI_yscN"/>
    <property type="match status" value="1"/>
</dbReference>
<dbReference type="NCBIfam" id="NF006012">
    <property type="entry name" value="PRK08149.1"/>
    <property type="match status" value="1"/>
</dbReference>
<dbReference type="PANTHER" id="PTHR15184">
    <property type="entry name" value="ATP SYNTHASE"/>
    <property type="match status" value="1"/>
</dbReference>
<dbReference type="PANTHER" id="PTHR15184:SF9">
    <property type="entry name" value="SPI-1 TYPE 3 SECRETION SYSTEM ATPASE"/>
    <property type="match status" value="1"/>
</dbReference>
<dbReference type="Pfam" id="PF00006">
    <property type="entry name" value="ATP-synt_ab"/>
    <property type="match status" value="1"/>
</dbReference>
<dbReference type="Pfam" id="PF02874">
    <property type="entry name" value="ATP-synt_ab_N"/>
    <property type="match status" value="1"/>
</dbReference>
<dbReference type="Pfam" id="PF18269">
    <property type="entry name" value="T3SS_ATPase_C"/>
    <property type="match status" value="1"/>
</dbReference>
<dbReference type="SMART" id="SM00382">
    <property type="entry name" value="AAA"/>
    <property type="match status" value="1"/>
</dbReference>
<dbReference type="SUPFAM" id="SSF52540">
    <property type="entry name" value="P-loop containing nucleoside triphosphate hydrolases"/>
    <property type="match status" value="1"/>
</dbReference>
<dbReference type="PROSITE" id="PS00152">
    <property type="entry name" value="ATPASE_ALPHA_BETA"/>
    <property type="match status" value="1"/>
</dbReference>
<name>SCTN_SHIFL</name>
<evidence type="ECO:0000250" key="1">
    <source>
        <dbReference type="UniProtKB" id="P0A1B9"/>
    </source>
</evidence>
<evidence type="ECO:0000269" key="2">
    <source>
    </source>
</evidence>
<evidence type="ECO:0000269" key="3">
    <source>
    </source>
</evidence>
<evidence type="ECO:0000269" key="4">
    <source>
    </source>
</evidence>
<evidence type="ECO:0000269" key="5">
    <source>
    </source>
</evidence>
<evidence type="ECO:0000269" key="6">
    <source>
    </source>
</evidence>
<evidence type="ECO:0000269" key="7">
    <source>
    </source>
</evidence>
<evidence type="ECO:0000269" key="8">
    <source>
    </source>
</evidence>
<evidence type="ECO:0000269" key="9">
    <source>
    </source>
</evidence>
<evidence type="ECO:0000269" key="10">
    <source>
    </source>
</evidence>
<evidence type="ECO:0000269" key="11">
    <source>
    </source>
</evidence>
<evidence type="ECO:0000303" key="12">
    <source>
    </source>
</evidence>
<evidence type="ECO:0000303" key="13">
    <source>
    </source>
</evidence>
<evidence type="ECO:0000305" key="14"/>
<evidence type="ECO:0000305" key="15">
    <source>
    </source>
</evidence>
<evidence type="ECO:0000305" key="16">
    <source>
    </source>
</evidence>
<evidence type="ECO:0000305" key="17">
    <source>
    </source>
</evidence>
<evidence type="ECO:0007744" key="18">
    <source>
        <dbReference type="PDB" id="5SWJ"/>
    </source>
</evidence>
<evidence type="ECO:0007744" key="19">
    <source>
        <dbReference type="PDB" id="5SWL"/>
    </source>
</evidence>
<evidence type="ECO:0007744" key="20">
    <source>
        <dbReference type="PDB" id="5SYP"/>
    </source>
</evidence>
<evidence type="ECO:0007744" key="21">
    <source>
        <dbReference type="PDB" id="5SYR"/>
    </source>
</evidence>
<evidence type="ECO:0007744" key="22">
    <source>
        <dbReference type="PDB" id="5YBH"/>
    </source>
</evidence>
<evidence type="ECO:0007744" key="23">
    <source>
        <dbReference type="PDB" id="5YBI"/>
    </source>
</evidence>
<evidence type="ECO:0007744" key="24">
    <source>
        <dbReference type="PDB" id="5ZT1"/>
    </source>
</evidence>
<evidence type="ECO:0007744" key="25">
    <source>
        <dbReference type="PDB" id="6N6L"/>
    </source>
</evidence>
<evidence type="ECO:0007744" key="26">
    <source>
        <dbReference type="PDB" id="6N6M"/>
    </source>
</evidence>
<evidence type="ECO:0007744" key="27">
    <source>
        <dbReference type="PDB" id="6N6Z"/>
    </source>
</evidence>
<evidence type="ECO:0007744" key="28">
    <source>
        <dbReference type="PDB" id="6N70"/>
    </source>
</evidence>
<evidence type="ECO:0007744" key="29">
    <source>
        <dbReference type="PDB" id="6N71"/>
    </source>
</evidence>
<evidence type="ECO:0007744" key="30">
    <source>
        <dbReference type="PDB" id="6N72"/>
    </source>
</evidence>
<evidence type="ECO:0007744" key="31">
    <source>
        <dbReference type="PDB" id="6N73"/>
    </source>
</evidence>
<evidence type="ECO:0007744" key="32">
    <source>
        <dbReference type="PDB" id="6N74"/>
    </source>
</evidence>
<evidence type="ECO:0007744" key="33">
    <source>
        <dbReference type="PDB" id="6N75"/>
    </source>
</evidence>
<evidence type="ECO:0007744" key="34">
    <source>
        <dbReference type="PDB" id="6N76"/>
    </source>
</evidence>
<evidence type="ECO:0007829" key="35">
    <source>
        <dbReference type="PDB" id="5SWJ"/>
    </source>
</evidence>
<evidence type="ECO:0007829" key="36">
    <source>
        <dbReference type="PDB" id="5SYP"/>
    </source>
</evidence>
<evidence type="ECO:0007829" key="37">
    <source>
        <dbReference type="PDB" id="5SYR"/>
    </source>
</evidence>
<evidence type="ECO:0007829" key="38">
    <source>
        <dbReference type="PDB" id="5ZT1"/>
    </source>
</evidence>
<evidence type="ECO:0007829" key="39">
    <source>
        <dbReference type="PDB" id="6N6M"/>
    </source>
</evidence>
<evidence type="ECO:0007829" key="40">
    <source>
        <dbReference type="PDB" id="6N70"/>
    </source>
</evidence>
<evidence type="ECO:0007829" key="41">
    <source>
        <dbReference type="PDB" id="6N73"/>
    </source>
</evidence>
<accession>P0A1C1</accession>
<accession>P35531</accession>
<proteinExistence type="evidence at protein level"/>
<feature type="chain" id="PRO_0000144706" description="Type 3 secretion system ATPase">
    <location>
        <begin position="1"/>
        <end position="430"/>
    </location>
</feature>
<feature type="binding site" evidence="17">
    <location>
        <begin position="162"/>
        <end position="167"/>
    </location>
    <ligand>
        <name>ATP</name>
        <dbReference type="ChEBI" id="CHEBI:30616"/>
    </ligand>
</feature>
<feature type="mutagenesis site" description="Prevents oligomerization. Loss of ATPase activity. Mutant is unable to form external MxiH/SctF needles and to restore the invasion phenotype in a knockout strain." evidence="6 7">
    <location>
        <begin position="1"/>
        <end position="79"/>
    </location>
</feature>
<feature type="mutagenesis site" description="Forms mainly monomers. Shows a significantly reduced yet robust rate of hydrolysis. Can restore hemolysis and invasion phenotypes in a knockout strain." evidence="7">
    <location>
        <begin position="1"/>
        <end position="6"/>
    </location>
</feature>
<feature type="mutagenesis site" description="No change in ATPase activity." evidence="8">
    <original>C</original>
    <variation>V</variation>
    <location>
        <position position="163"/>
    </location>
</feature>
<feature type="mutagenesis site" description="Lack of ATPase activity. Mutant is unable to form external MxiH/SctF needles and to restore the invasion phenotype in a knockout strain." evidence="5 6 8">
    <original>K</original>
    <variation>A</variation>
    <location>
        <position position="165"/>
    </location>
</feature>
<feature type="mutagenesis site" description="Decrease in ATPase activity." evidence="8">
    <original>F</original>
    <variation>A</variation>
    <location>
        <position position="167"/>
    </location>
</feature>
<feature type="mutagenesis site" description="Lack of ATPase activity. Mutant is unable to form external MxiH/SctF needles and to restore the invasion phenotype in a knockout strain." evidence="6">
    <original>E</original>
    <variation>A</variation>
    <location>
        <position position="188"/>
    </location>
</feature>
<feature type="mutagenesis site" description="Reduces oligomerization. Lack of ATPase activity. Abolishes invasion and hemolysis phenotype. Cannot secrete IpaC." evidence="10">
    <original>R</original>
    <variation>A</variation>
    <variation>E</variation>
    <location>
        <position position="189"/>
    </location>
</feature>
<feature type="mutagenesis site" description="Abolishes oligomerization. Lack of ATPase activity. Abolishes invasion and hemolysis phenotype. Cannot secrete IpaC." evidence="10">
    <original>R</original>
    <variation>A</variation>
    <location>
        <position position="191"/>
    </location>
</feature>
<feature type="mutagenesis site" description="Abolishes oligomerization. Lack of ATPase activity. Exhibits moderate invasion and hemolysis levels. Low levels of secreted IpaC." evidence="10">
    <original>R</original>
    <variation>E</variation>
    <location>
        <position position="191"/>
    </location>
</feature>
<feature type="mutagenesis site" description="Lack of ATPase activity." evidence="8">
    <original>D</original>
    <variation>E</variation>
    <location>
        <position position="249"/>
    </location>
</feature>
<feature type="mutagenesis site" description="Does not affect oligomerization. Exhibits ATPase activity levels similar to the monomeric form. Shows at or near wild-type levels of hemolysis and invasion. Increased IpaC secretion." evidence="10">
    <original>E</original>
    <variation>A</variation>
    <variation>R</variation>
    <location>
        <position position="267"/>
    </location>
</feature>
<feature type="mutagenesis site" description="Abolishes oligomerization. Exhibits ATPase activity levels similar to the wild-type monomeric form. Shows at or near wild-type levels of hemolysis and invasion. Wild-type levels of IpaC secretion." evidence="10">
    <original>R</original>
    <variation>A</variation>
    <location>
        <position position="271"/>
    </location>
</feature>
<feature type="mutagenesis site" description="Significantly reduces oligomerization. Maintains wild-type monomer ATPase levels but shows attenuated oligomer activity. Shows severely attenuated levels of both invasion and hemolysis. Low levels of secreted IpaC." evidence="10">
    <original>R</original>
    <variation>E</variation>
    <location>
        <position position="271"/>
    </location>
</feature>
<feature type="mutagenesis site" description="Abolishes oligomerization. Exhibits ATPase activity levels similar to the wild-type monomeric form. Shows severely attenuated levels of both invasion and hemolysis. Low levels of secreted IpaC." evidence="10">
    <original>R</original>
    <variation>A</variation>
    <location>
        <position position="272"/>
    </location>
</feature>
<feature type="mutagenesis site" description="Significantly reduces oligomerization. Maintains wild-type levels for both monomeric and oligomeric species. Abolishes invasion and hemolysis phenotype. Cannot secrete IpaC." evidence="10">
    <original>R</original>
    <variation>E</variation>
    <location>
        <position position="272"/>
    </location>
</feature>
<feature type="mutagenesis site" description="Reduces oligomerization. Lack of ATPase activity. Exhibits moderate invasion and hemolysis levels. Low levels of secreted IpaC." evidence="10">
    <original>E</original>
    <variation>A</variation>
    <location>
        <position position="287"/>
    </location>
</feature>
<feature type="mutagenesis site" description="Reduces oligomerization. Lack of ATPase activity. Abolishes invasion and hemolysis phenotype. Low levels of secreted IpaC." evidence="10">
    <original>E</original>
    <variation>R</variation>
    <location>
        <position position="287"/>
    </location>
</feature>
<feature type="mutagenesis site" description="Lacks ATPase activity." evidence="8">
    <original>L</original>
    <variation>D</variation>
    <variation>A</variation>
    <variation>I</variation>
    <location>
        <position position="305"/>
    </location>
</feature>
<feature type="mutagenesis site" description="Decrease in ATPase activity." evidence="8">
    <original>L</original>
    <variation>A</variation>
    <location>
        <position position="306"/>
    </location>
</feature>
<feature type="mutagenesis site" description="Slight decrease in ATPase activity." evidence="8">
    <original>E</original>
    <variation>A</variation>
    <location>
        <position position="307"/>
    </location>
</feature>
<feature type="mutagenesis site" description="Decrease in ATPase activity." evidence="8">
    <original>D</original>
    <variation>A</variation>
    <location>
        <position position="308"/>
    </location>
</feature>
<feature type="mutagenesis site" description="Slight decrease in ATPase activity." evidence="8">
    <original>D</original>
    <variation>A</variation>
    <location>
        <position position="310"/>
    </location>
</feature>
<feature type="mutagenesis site" description="Slight decrease in ATPase activity." evidence="8">
    <original>F</original>
    <variation>A</variation>
    <location>
        <position position="311"/>
    </location>
</feature>
<feature type="mutagenesis site" description="Lack of ATPase activity." evidence="8">
    <original>D</original>
    <variation>A</variation>
    <location>
        <position position="313"/>
    </location>
</feature>
<feature type="mutagenesis site" description="Lack of ATPase activity. Mutant is unable to form external MxiH/SctF needles and to restore the invasion phenotype in a knockout strain." evidence="6 8">
    <original>R</original>
    <variation>A</variation>
    <location>
        <position position="350"/>
    </location>
</feature>
<feature type="strand" evidence="37">
    <location>
        <begin position="84"/>
        <end position="88"/>
    </location>
</feature>
<feature type="helix" evidence="37">
    <location>
        <begin position="89"/>
        <end position="91"/>
    </location>
</feature>
<feature type="strand" evidence="37">
    <location>
        <begin position="94"/>
        <end position="96"/>
    </location>
</feature>
<feature type="strand" evidence="38">
    <location>
        <begin position="98"/>
        <end position="100"/>
    </location>
</feature>
<feature type="strand" evidence="37">
    <location>
        <begin position="102"/>
        <end position="106"/>
    </location>
</feature>
<feature type="strand" evidence="37">
    <location>
        <begin position="115"/>
        <end position="119"/>
    </location>
</feature>
<feature type="helix" evidence="37">
    <location>
        <begin position="126"/>
        <end position="128"/>
    </location>
</feature>
<feature type="strand" evidence="37">
    <location>
        <begin position="134"/>
        <end position="136"/>
    </location>
</feature>
<feature type="helix" evidence="37">
    <location>
        <begin position="141"/>
        <end position="146"/>
    </location>
</feature>
<feature type="strand" evidence="37">
    <location>
        <begin position="154"/>
        <end position="159"/>
    </location>
</feature>
<feature type="strand" evidence="35">
    <location>
        <begin position="161"/>
        <end position="164"/>
    </location>
</feature>
<feature type="helix" evidence="37">
    <location>
        <begin position="165"/>
        <end position="175"/>
    </location>
</feature>
<feature type="strand" evidence="37">
    <location>
        <begin position="179"/>
        <end position="186"/>
    </location>
</feature>
<feature type="helix" evidence="37">
    <location>
        <begin position="190"/>
        <end position="201"/>
    </location>
</feature>
<feature type="helix" evidence="37">
    <location>
        <begin position="206"/>
        <end position="208"/>
    </location>
</feature>
<feature type="strand" evidence="37">
    <location>
        <begin position="209"/>
        <end position="214"/>
    </location>
</feature>
<feature type="strand" evidence="41">
    <location>
        <begin position="216"/>
        <end position="218"/>
    </location>
</feature>
<feature type="helix" evidence="37">
    <location>
        <begin position="220"/>
        <end position="239"/>
    </location>
</feature>
<feature type="strand" evidence="37">
    <location>
        <begin position="243"/>
        <end position="249"/>
    </location>
</feature>
<feature type="helix" evidence="37">
    <location>
        <begin position="251"/>
        <end position="265"/>
    </location>
</feature>
<feature type="strand" evidence="36">
    <location>
        <begin position="269"/>
        <end position="271"/>
    </location>
</feature>
<feature type="strand" evidence="40">
    <location>
        <begin position="274"/>
        <end position="276"/>
    </location>
</feature>
<feature type="helix" evidence="37">
    <location>
        <begin position="278"/>
        <end position="280"/>
    </location>
</feature>
<feature type="helix" evidence="37">
    <location>
        <begin position="281"/>
        <end position="286"/>
    </location>
</feature>
<feature type="strand" evidence="37">
    <location>
        <begin position="290"/>
        <end position="292"/>
    </location>
</feature>
<feature type="strand" evidence="37">
    <location>
        <begin position="297"/>
        <end position="305"/>
    </location>
</feature>
<feature type="strand" evidence="37">
    <location>
        <begin position="308"/>
        <end position="310"/>
    </location>
</feature>
<feature type="helix" evidence="37">
    <location>
        <begin position="314"/>
        <end position="322"/>
    </location>
</feature>
<feature type="strand" evidence="37">
    <location>
        <begin position="323"/>
        <end position="329"/>
    </location>
</feature>
<feature type="helix" evidence="37">
    <location>
        <begin position="331"/>
        <end position="335"/>
    </location>
</feature>
<feature type="helix" evidence="37">
    <location>
        <begin position="344"/>
        <end position="346"/>
    </location>
</feature>
<feature type="helix" evidence="37">
    <location>
        <begin position="352"/>
        <end position="355"/>
    </location>
</feature>
<feature type="helix" evidence="37">
    <location>
        <begin position="358"/>
        <end position="382"/>
    </location>
</feature>
<feature type="turn" evidence="39">
    <location>
        <begin position="388"/>
        <end position="390"/>
    </location>
</feature>
<feature type="helix" evidence="37">
    <location>
        <begin position="392"/>
        <end position="398"/>
    </location>
</feature>
<feature type="helix" evidence="37">
    <location>
        <begin position="401"/>
        <end position="408"/>
    </location>
</feature>
<feature type="helix" evidence="37">
    <location>
        <begin position="418"/>
        <end position="429"/>
    </location>
</feature>
<sequence>MSYTKLLTQLSFPNRISGPILETSLSDVSIGEICNIQAGIESNEIVARAQVVGFHDEKTILSLIGNSRGLSRQTLIKPTAQFLHTQVGRGLLGAVVNPLGEVTDKFAVTDNSEILYRPVDNAPPLYSERAAIEKPFLTGIKVIDSLLTCGEGQRMGIFASAGCGKTFLMNMLIEHSGADIYVIGLIGERGREVTETVDYLKNSEKKSRCVLVYATSDYSSVDRCNAAYIATAIAEFFRTEGHKVALFIDSLTRYARALRDVALAAGESPARRGYPVSVFDSLPRLLERPGKLKAGGSITAFYTVLLEDDDFADPLAEEVRSILDGHIYLSRNLAQKGQFPAIDSLKSISRVFTQVVDEKHRIMAAAFRELLSEIEELRTIIDFGEYKPGENASQDKIYNKISVVESFLKQDYRLGFTYEQTMELIGETIR</sequence>
<comment type="function">
    <text evidence="1 5 6 7 10 15 16">ATPase component of the type III secretion system (T3SS), also called injectisome, which is used to inject bacterial effector proteins into eukaryotic host cells (PubMed:26947936, PubMed:27770024, PubMed:29595954). Acts as a molecular motor to provide the energy that is required for the export of proteins (Probable). Required for type III secretion apparatus (T3SA) formation, proper protein secretion, host cell invasion and virulence (PubMed:26947936, PubMed:27770024, PubMed:31162724). May play a critical role in T3SS substrate recognition, disassembly of the effector/chaperone complex and unfolding of the effector in an ATP-dependent manner prior to secretion (By similarity).</text>
</comment>
<comment type="catalytic activity">
    <reaction evidence="15 16">
        <text>ATP + H2O + cellular proteinSide 1 = ADP + phosphate + cellular proteinSide 2.</text>
        <dbReference type="EC" id="7.4.2.8"/>
    </reaction>
</comment>
<comment type="activity regulation">
    <text evidence="5 6 7 11">Oligomerization increases ATPase activity (PubMed:26947936, PubMed:27770024, PubMed:29595954, PubMed:31978132). Monomeric forms exhibit low-level ATPase activity by forming short-lived oligomers with active site contributions from at least two protomers. In contrast, oligomers exhibit enhanced ATP hydrolysis rates that likely result from multiple preformed active sites within the oligomeric complex (PubMed:31978132). Oligomerization is important for both enzyme activation and T3SS function (PubMed:31978132). Activity is regulated by MxiN/SctL, which differentially regulates the activity of the monomer and the oligomer: it up-regulates the ATPase activity of the monomer, while it down-regulates the activity of the oligomer (PubMed:29595954).</text>
</comment>
<comment type="biophysicochemical properties">
    <kinetics>
        <KM evidence="7">181 uM for ATP (monomeric form)</KM>
        <KM evidence="7">114 uM for ATP (trimeric form)</KM>
        <KM evidence="7">201 uM for ATP (monomeric form, in the presence of MxiN/SctL)</KM>
        <KM evidence="7">116 uM for ATP (trimeric form, in the presence of MxiN/SctL)</KM>
        <Vmax evidence="7">0.28 umol/min/mg enzyme for ATPase activity (monomeric form)</Vmax>
        <Vmax evidence="7">1.04 umol/min/mg enzyme for ATPase activity (trimeric form)</Vmax>
        <Vmax evidence="7">0.51 umol/min/mg enzyme for ATPase activity (monomeric form, in the presence of MxiN/SctL)</Vmax>
        <Vmax evidence="7">0.62 umol/min/mg enzyme for ATPase activity (trimeric form, in the presence of MxiN/SctL)</Vmax>
        <text evidence="7">kcat is 0.22 sec(-1) for ATPase activity (monomeric form). kcat is 0.84 sec(-1) for ATPase activity (trimeric form). kcat is 0.41 sec(-1) for ATPase activity (monomeric form, in the presence of MxiN/SctL). kcat is 0.50 sec(-1) for ATPase activity (trimeric form, in the presence of MxiN/SctL).</text>
    </kinetics>
</comment>
<comment type="subunit">
    <text evidence="2 3 4 7 9">The core secretion machinery of the T3SS is composed of approximately 20 different proteins, including cytoplasmic components, a base, an export apparatus and a needle (PubMed:25583506, PubMed:30107569). This subunit is part of the cytosolic complex (PubMed:18657109, PubMed:25583506). Forms homohexamers (PubMed:25583506). Interacts directly with MxiN/SctL (stator protein) and Spa13/SctO (stalk protein) (PubMed:25583506, PubMed:29595954). Can form a soluble complex with Spa33/SctQ, MxiN/SctL and MxiK/SctK (PubMed:12864857, PubMed:18657109).</text>
</comment>
<comment type="interaction">
    <interactant intactId="EBI-40252997">
        <id>P0A1C1</id>
    </interactant>
    <interactant intactId="EBI-40252997">
        <id>P0A1C1</id>
        <label>sctN</label>
    </interactant>
    <organismsDiffer>false</organismsDiffer>
    <experiments>2</experiments>
</comment>
<comment type="subcellular location">
    <subcellularLocation>
        <location evidence="3 4">Cytoplasm</location>
    </subcellularLocation>
</comment>
<comment type="domain">
    <text evidence="6 7 8 11">The N-terminal domain is required for oligomerization and ATPase activity (PubMed:27770024, PubMed:29595954). The six N-terminal residues are necessary for proper oligomer formation, though their absence does not entirely preclude oligomerization (PubMed:29595954). The extreme N-terminus is also required for interaction with MxiN/SctL (PubMed:29595954). The N-terminal domain, not ATPase activity, is responsible for localization of Spa47/SctN to the injectisome (PubMed:31978132). The binding of ATP induces a conformational change of a highly conserved luminal loop, facilitating ATP hydrolysis (PubMed:30013545).</text>
</comment>
<comment type="disruption phenotype">
    <text evidence="2 11">Mutant is defective for assembly of the needle and secretion of the translocon proteins IpaB/SctE and IpaC/SctB (PubMed:12864857, PubMed:31978132). Amount of the needle filament protein MxiH/SctF is greatly reduced (PubMed:12864857). T3SS effector protein secretion is reduced in Shigella strains coexpressing wild-type and inactive Spa47/SctN (PubMed:31978132).</text>
</comment>
<comment type="similarity">
    <text evidence="14">Belongs to the ATPase alpha/beta chains family. T3SS ATPase subfamily.</text>
</comment>
<geneLocation type="plasmid">
    <name>pWR100</name>
</geneLocation>
<geneLocation type="plasmid">
    <name>pWR501</name>
</geneLocation>
<geneLocation type="plasmid">
    <name>pMYSH6000</name>
</geneLocation>
<geneLocation type="plasmid">
    <name>pCP301</name>
</geneLocation>
<reference key="1">
    <citation type="journal article" date="1992" name="J. Bacteriol.">
        <title>Surface presentation of Shigella flexneri invasion plasmid antigens requires the products of the spa locus.</title>
        <authorList>
            <person name="Venkatesan M.M."/>
            <person name="Buysse J.M."/>
            <person name="Oaks E.V."/>
        </authorList>
    </citation>
    <scope>NUCLEOTIDE SEQUENCE [GENOMIC DNA]</scope>
    <source>
        <strain>M90T / Serotype 5a</strain>
        <plasmid>pWR100</plasmid>
    </source>
</reference>
<reference key="2">
    <citation type="journal article" date="1993" name="J. Bacteriol.">
        <title>Eight genes in region 5 that form an operon are essential for invasion of epithelial cells by Shigella flexneri 2a.</title>
        <authorList>
            <person name="Sasakawa C."/>
            <person name="Komatsu K."/>
            <person name="Tobe T."/>
            <person name="Suzuki T."/>
            <person name="Yoshikawa M."/>
        </authorList>
    </citation>
    <scope>NUCLEOTIDE SEQUENCE [GENOMIC DNA]</scope>
    <source>
        <strain>YSH6000 / Serotype 2a</strain>
        <plasmid>pMYSH6000</plasmid>
    </source>
</reference>
<reference key="3">
    <citation type="journal article" date="2000" name="Mol. Microbiol.">
        <title>The virulence plasmid pWR100 and the repertoire of proteins secreted by the type III secretion apparatus of Shigella flexneri.</title>
        <authorList>
            <person name="Buchrieser C."/>
            <person name="Glaser P."/>
            <person name="Rusniok C."/>
            <person name="Nedjari H."/>
            <person name="d'Hauteville H."/>
            <person name="Kunst F."/>
            <person name="Sansonetti P.J."/>
            <person name="Parsot C."/>
        </authorList>
    </citation>
    <scope>NUCLEOTIDE SEQUENCE [GENOMIC DNA]</scope>
    <source>
        <strain>M90T / Serotype 5a</strain>
        <plasmid>pWR100</plasmid>
    </source>
</reference>
<reference key="4">
    <citation type="journal article" date="2001" name="Infect. Immun.">
        <title>Complete DNA sequence and analysis of the large virulence plasmid of Shigella flexneri.</title>
        <authorList>
            <person name="Venkatesan M.M."/>
            <person name="Goldberg M.B."/>
            <person name="Rose D.J."/>
            <person name="Grotbeck E.J."/>
            <person name="Burland V."/>
            <person name="Blattner F.R."/>
        </authorList>
    </citation>
    <scope>NUCLEOTIDE SEQUENCE [GENOMIC DNA]</scope>
    <source>
        <strain>M90T / Serotype 5a</strain>
        <plasmid>pWR501</plasmid>
    </source>
</reference>
<reference key="5">
    <citation type="journal article" date="2002" name="Nucleic Acids Res.">
        <title>Genome sequence of Shigella flexneri 2a: insights into pathogenicity through comparison with genomes of Escherichia coli K12 and O157.</title>
        <authorList>
            <person name="Jin Q."/>
            <person name="Yuan Z."/>
            <person name="Xu J."/>
            <person name="Wang Y."/>
            <person name="Shen Y."/>
            <person name="Lu W."/>
            <person name="Wang J."/>
            <person name="Liu H."/>
            <person name="Yang J."/>
            <person name="Yang F."/>
            <person name="Zhang X."/>
            <person name="Zhang J."/>
            <person name="Yang G."/>
            <person name="Wu H."/>
            <person name="Qu D."/>
            <person name="Dong J."/>
            <person name="Sun L."/>
            <person name="Xue Y."/>
            <person name="Zhao A."/>
            <person name="Gao Y."/>
            <person name="Zhu J."/>
            <person name="Kan B."/>
            <person name="Ding K."/>
            <person name="Chen S."/>
            <person name="Cheng H."/>
            <person name="Yao Z."/>
            <person name="He B."/>
            <person name="Chen R."/>
            <person name="Ma D."/>
            <person name="Qiang B."/>
            <person name="Wen Y."/>
            <person name="Hou Y."/>
            <person name="Yu J."/>
        </authorList>
    </citation>
    <scope>NUCLEOTIDE SEQUENCE [LARGE SCALE GENOMIC DNA]</scope>
    <source>
        <strain>301 / Serotype 2a</strain>
        <plasmid>pCP301</plasmid>
    </source>
</reference>
<reference key="6">
    <citation type="journal article" date="1998" name="Microbiol. Mol. Biol. Rev.">
        <title>Type III protein secretion systems in bacterial pathogens of animals and plants.</title>
        <authorList>
            <person name="Hueck C.J."/>
        </authorList>
    </citation>
    <scope>REVIEW</scope>
    <scope>NOMENCLATURE</scope>
</reference>
<reference key="7">
    <citation type="journal article" date="2003" name="Mol. Microbiol.">
        <title>MxiK and MxiN interact with the Spa47 ATPase and are required for transit of the needle components MxiH and MxiI, but not of Ipa proteins, through the type III secretion apparatus of Shigella flexneri.</title>
        <authorList>
            <person name="Jouihri N."/>
            <person name="Sory M.P."/>
            <person name="Page A.L."/>
            <person name="Gounon P."/>
            <person name="Parsot C."/>
            <person name="Allaoui A."/>
        </authorList>
    </citation>
    <scope>DISRUPTION PHENOTYPE</scope>
    <scope>INTERACTION WITH MXIN/SCTL AND MXIK/SCTK</scope>
    <source>
        <strain>M90T / Serotype 5a</strain>
    </source>
</reference>
<reference key="8">
    <citation type="journal article" date="2008" name="FEMS Microbiol. Lett.">
        <title>Characterization of soluble complexes of the Shigella flexneri type III secretion system ATPase.</title>
        <authorList>
            <person name="Johnson S."/>
            <person name="Blocker A."/>
        </authorList>
    </citation>
    <scope>SUBCELLULAR LOCATION</scope>
    <scope>SUBUNIT</scope>
    <scope>INTERACTION WITH SPA33/SCTQ; MXIN/SCTL AND MXIK/SCTK</scope>
    <source>
        <strain>M90T / Serotype 5a</strain>
    </source>
</reference>
<reference key="9">
    <citation type="journal article" date="2015" name="Proc. Natl. Acad. Sci. U.S.A.">
        <title>Visualization of the type III secretion sorting platform of Shigella flexneri.</title>
        <authorList>
            <person name="Hu B."/>
            <person name="Morado D.R."/>
            <person name="Margolin W."/>
            <person name="Rohde J.R."/>
            <person name="Arizmendi O."/>
            <person name="Picking W.L."/>
            <person name="Picking W.D."/>
            <person name="Liu J."/>
        </authorList>
    </citation>
    <scope>SUBCELLULAR LOCATION</scope>
    <scope>SUBUNIT</scope>
    <scope>INTERACTION WITH MXIN/SCTL AND SPA13/SCTO</scope>
    <source>
        <strain>M90T / Serotype 5a</strain>
    </source>
</reference>
<reference key="10">
    <citation type="journal article" date="2016" name="Protein Sci.">
        <title>Spa47 is an oligomerization-activated type three secretion system (T3SS) ATPase from Shigella flexneri.</title>
        <authorList>
            <person name="Burgess J.L."/>
            <person name="Jones H.B."/>
            <person name="Kumar P."/>
            <person name="Toth R.T. IV"/>
            <person name="Middaugh C.R."/>
            <person name="Antony E."/>
            <person name="Dickenson N.E."/>
        </authorList>
    </citation>
    <scope>FUNCTION</scope>
    <scope>ATPASE ACTIVITY</scope>
    <scope>ACTIVITY REGULATION</scope>
    <scope>MUTAGENESIS OF LYS-165</scope>
    <source>
        <strain>ATCC 700930 / 2457T / Serotype 2a</strain>
    </source>
</reference>
<reference key="11">
    <citation type="journal article" date="2018" name="Biochemistry">
        <title>MxiN differentially regulates monomeric and oligomeric species of the Shigella type three secretion system ATPase Spa47.</title>
        <authorList>
            <person name="Case H.B."/>
            <person name="Dickenson N.E."/>
        </authorList>
    </citation>
    <scope>FUNCTION</scope>
    <scope>ATPASE ACTIVITY</scope>
    <scope>ACTIVITY REGULATION</scope>
    <scope>BIOPHYSICOCHEMICAL PROPERTIES</scope>
    <scope>INTERACTION WITH MXIN/SCTL</scope>
    <scope>DOMAIN</scope>
    <scope>MUTAGENESIS OF 1-MET--THR-79 AND 1-MET--LEU-6</scope>
    <source>
        <strain>ATCC 700930 / 2457T / Serotype 2a</strain>
    </source>
</reference>
<reference key="12">
    <citation type="journal article" date="2018" name="FEMS Microbiol. Lett.">
        <title>Bacterial type III secretion systems: a complex device for the delivery of bacterial effector proteins into eukaryotic host cells.</title>
        <authorList>
            <person name="Wagner S."/>
            <person name="Grin I."/>
            <person name="Malmsheimer S."/>
            <person name="Singh N."/>
            <person name="Torres-Vargas C.E."/>
            <person name="Westerhausen S."/>
        </authorList>
    </citation>
    <scope>REVIEW</scope>
    <scope>SUBUNIT</scope>
</reference>
<reference key="13">
    <citation type="journal article" date="2020" name="PLoS ONE">
        <title>Dominant negative effects by inactive Spa47 mutants inhibit T3SS function and Shigella virulence.</title>
        <authorList>
            <person name="Burgess J.L."/>
            <person name="Case H.B."/>
            <person name="Burgess R.A."/>
            <person name="Dickenson N.E."/>
        </authorList>
    </citation>
    <scope>ACTIVITY REGULATION</scope>
    <scope>DOMAIN</scope>
    <scope>DISRUPTION PHENOTYPE</scope>
    <source>
        <strain>ATCC 700930 / 2457T / Serotype 2a</strain>
    </source>
</reference>
<reference evidence="18 19 20 21" key="14">
    <citation type="journal article" date="2016" name="J. Biol. Chem.">
        <title>Structural and biochemical characterization of Spa47 provides mechanistic insight into type III secretion system ATPase activation and Shigella virulence regulation.</title>
        <authorList>
            <person name="Burgess J.L."/>
            <person name="Burgess R.A."/>
            <person name="Morales Y."/>
            <person name="Bouvang J.M."/>
            <person name="Johnson S.J."/>
            <person name="Dickenson N.E."/>
        </authorList>
    </citation>
    <scope>X-RAY CRYSTALLOGRAPHY (1.80 ANGSTROMS) OF 80-430 OF WILD-TYPE AND MUTANTS ALA-165; ALA-188 AND ALA-350</scope>
    <scope>FUNCTION</scope>
    <scope>ATPASE ACTIVITY</scope>
    <scope>ACTIVITY REGULATION</scope>
    <scope>DOMAIN</scope>
    <scope>MUTAGENESIS OF 1-MET--THR-79; LYS-165; GLU-188 AND ARG-350</scope>
</reference>
<reference evidence="22 23 24" key="15">
    <citation type="journal article" date="2018" name="Front. Microbiol.">
        <title>Structural insight into conformational changes induced by ATP binding in a type III secretion-associated ATPase from Shigella flexneri.</title>
        <authorList>
            <person name="Gao X."/>
            <person name="Mu Z."/>
            <person name="Yu X."/>
            <person name="Qin B."/>
            <person name="Wojdyla J."/>
            <person name="Wang M."/>
            <person name="Cui S."/>
        </authorList>
    </citation>
    <scope>X-RAY CRYSTALLOGRAPHY (2.27 ANGSTROMS) OF 84-430 IN COMPLEXES WITH ATP ANALOGS AND MAGNESIUM</scope>
    <scope>ATPASE ACTIVITY</scope>
    <scope>DOMAIN</scope>
    <scope>MUTAGENESIS OF CYS-163; LYS-165; PHE-167; ASP-249; LEU-305; LEU-306; GLU-307; ASP-308; ASP-310; PHE-311; ASP-313 AND ARG-350</scope>
    <source>
        <strain>301 / Serotype 2a</strain>
        <plasmid>pCP301</plasmid>
    </source>
</reference>
<reference evidence="25 26 27 28 29 30 31 32 33 34" key="16">
    <citation type="journal article" date="2019" name="Proteins">
        <title>Interfacial amino acids support Spa47 oligomerization and shigella type three secretion system activation.</title>
        <authorList>
            <person name="Demler H.J."/>
            <person name="Case H.B."/>
            <person name="Morales Y."/>
            <person name="Bernard A.R."/>
            <person name="Johnson S.J."/>
            <person name="Dickenson N.E."/>
        </authorList>
    </citation>
    <scope>X-RAY CRYSTALLOGRAPHY (1.85 ANGSTROMS) OF 80-430 OF MUTANTS</scope>
    <scope>FUNCTION</scope>
    <scope>ATPASE ACTIVITY</scope>
    <scope>MUTAGENESIS OF ARG-189; ARG-191; GLU-267; ARG-271; ARG-272 AND GLU-287</scope>
    <source>
        <strain>ATCC 700930 / 2457T / Serotype 2a</strain>
    </source>
</reference>
<organism>
    <name type="scientific">Shigella flexneri</name>
    <dbReference type="NCBI Taxonomy" id="623"/>
    <lineage>
        <taxon>Bacteria</taxon>
        <taxon>Pseudomonadati</taxon>
        <taxon>Pseudomonadota</taxon>
        <taxon>Gammaproteobacteria</taxon>
        <taxon>Enterobacterales</taxon>
        <taxon>Enterobacteriaceae</taxon>
        <taxon>Shigella</taxon>
    </lineage>
</organism>
<gene>
    <name evidence="13" type="primary">sctN</name>
    <name type="synonym">mxiB</name>
    <name evidence="12" type="synonym">spa47</name>
    <name type="synonym">spaL</name>
    <name type="ordered locus">CP0149</name>
</gene>
<keyword id="KW-0002">3D-structure</keyword>
<keyword id="KW-0067">ATP-binding</keyword>
<keyword id="KW-0963">Cytoplasm</keyword>
<keyword id="KW-0547">Nucleotide-binding</keyword>
<keyword id="KW-0614">Plasmid</keyword>
<keyword id="KW-0653">Protein transport</keyword>
<keyword id="KW-1185">Reference proteome</keyword>
<keyword id="KW-1278">Translocase</keyword>
<keyword id="KW-0813">Transport</keyword>
<keyword id="KW-0843">Virulence</keyword>
<protein>
    <recommendedName>
        <fullName evidence="14">Type 3 secretion system ATPase</fullName>
        <shortName evidence="14">T3SS ATPase</shortName>
        <ecNumber evidence="15 16">7.4.2.8</ecNumber>
    </recommendedName>
</protein>